<organism>
    <name type="scientific">Triticum aestivum</name>
    <name type="common">Wheat</name>
    <dbReference type="NCBI Taxonomy" id="4565"/>
    <lineage>
        <taxon>Eukaryota</taxon>
        <taxon>Viridiplantae</taxon>
        <taxon>Streptophyta</taxon>
        <taxon>Embryophyta</taxon>
        <taxon>Tracheophyta</taxon>
        <taxon>Spermatophyta</taxon>
        <taxon>Magnoliopsida</taxon>
        <taxon>Liliopsida</taxon>
        <taxon>Poales</taxon>
        <taxon>Poaceae</taxon>
        <taxon>BOP clade</taxon>
        <taxon>Pooideae</taxon>
        <taxon>Triticodae</taxon>
        <taxon>Triticeae</taxon>
        <taxon>Triticinae</taxon>
        <taxon>Triticum</taxon>
    </lineage>
</organism>
<name>RK36_WHEAT</name>
<evidence type="ECO:0000305" key="1"/>
<comment type="subcellular location">
    <subcellularLocation>
        <location>Plastid</location>
        <location>Chloroplast</location>
    </subcellularLocation>
</comment>
<comment type="similarity">
    <text evidence="1">Belongs to the bacterial ribosomal protein bL36 family.</text>
</comment>
<gene>
    <name type="primary">rpl36</name>
</gene>
<dbReference type="EMBL" id="AB042240">
    <property type="protein sequence ID" value="BAB47067.1"/>
    <property type="molecule type" value="Genomic_DNA"/>
</dbReference>
<dbReference type="RefSeq" id="NP_114291.1">
    <property type="nucleotide sequence ID" value="NC_002762.1"/>
</dbReference>
<dbReference type="SMR" id="P62728"/>
<dbReference type="STRING" id="4565.P62728"/>
<dbReference type="PaxDb" id="4565-EPlTAEP00000010034"/>
<dbReference type="GeneID" id="803148"/>
<dbReference type="KEGG" id="taes:803148"/>
<dbReference type="eggNOG" id="ENOG502SBPU">
    <property type="taxonomic scope" value="Eukaryota"/>
</dbReference>
<dbReference type="HOGENOM" id="CLU_135723_6_2_1"/>
<dbReference type="Proteomes" id="UP000019116">
    <property type="component" value="Chloroplast"/>
</dbReference>
<dbReference type="GO" id="GO:0009507">
    <property type="term" value="C:chloroplast"/>
    <property type="evidence" value="ECO:0007669"/>
    <property type="project" value="UniProtKB-SubCell"/>
</dbReference>
<dbReference type="GO" id="GO:1990904">
    <property type="term" value="C:ribonucleoprotein complex"/>
    <property type="evidence" value="ECO:0007669"/>
    <property type="project" value="UniProtKB-KW"/>
</dbReference>
<dbReference type="GO" id="GO:0005840">
    <property type="term" value="C:ribosome"/>
    <property type="evidence" value="ECO:0007669"/>
    <property type="project" value="UniProtKB-KW"/>
</dbReference>
<dbReference type="GO" id="GO:0003735">
    <property type="term" value="F:structural constituent of ribosome"/>
    <property type="evidence" value="ECO:0007669"/>
    <property type="project" value="InterPro"/>
</dbReference>
<dbReference type="GO" id="GO:0006412">
    <property type="term" value="P:translation"/>
    <property type="evidence" value="ECO:0007669"/>
    <property type="project" value="UniProtKB-UniRule"/>
</dbReference>
<dbReference type="HAMAP" id="MF_00251">
    <property type="entry name" value="Ribosomal_bL36"/>
    <property type="match status" value="1"/>
</dbReference>
<dbReference type="InterPro" id="IPR000473">
    <property type="entry name" value="Ribosomal_bL36"/>
</dbReference>
<dbReference type="InterPro" id="IPR035977">
    <property type="entry name" value="Ribosomal_bL36_sp"/>
</dbReference>
<dbReference type="NCBIfam" id="TIGR01022">
    <property type="entry name" value="rpmJ_bact"/>
    <property type="match status" value="1"/>
</dbReference>
<dbReference type="PANTHER" id="PTHR42888">
    <property type="entry name" value="50S RIBOSOMAL PROTEIN L36, CHLOROPLASTIC"/>
    <property type="match status" value="1"/>
</dbReference>
<dbReference type="PANTHER" id="PTHR42888:SF1">
    <property type="entry name" value="LARGE RIBOSOMAL SUBUNIT PROTEIN BL36C"/>
    <property type="match status" value="1"/>
</dbReference>
<dbReference type="Pfam" id="PF00444">
    <property type="entry name" value="Ribosomal_L36"/>
    <property type="match status" value="1"/>
</dbReference>
<dbReference type="SUPFAM" id="SSF57840">
    <property type="entry name" value="Ribosomal protein L36"/>
    <property type="match status" value="1"/>
</dbReference>
<dbReference type="PROSITE" id="PS00828">
    <property type="entry name" value="RIBOSOMAL_L36"/>
    <property type="match status" value="1"/>
</dbReference>
<proteinExistence type="inferred from homology"/>
<keyword id="KW-0150">Chloroplast</keyword>
<keyword id="KW-0934">Plastid</keyword>
<keyword id="KW-1185">Reference proteome</keyword>
<keyword id="KW-0687">Ribonucleoprotein</keyword>
<keyword id="KW-0689">Ribosomal protein</keyword>
<sequence length="37" mass="4447">MKIRASVRKICTKCRLIRRRGRIRVICSNPKHKQRQG</sequence>
<geneLocation type="chloroplast"/>
<accession>P62728</accession>
<accession>P12143</accession>
<protein>
    <recommendedName>
        <fullName evidence="1">Large ribosomal subunit protein bL36c</fullName>
    </recommendedName>
    <alternativeName>
        <fullName>50S ribosomal protein L36, chloroplastic</fullName>
    </alternativeName>
</protein>
<feature type="chain" id="PRO_0000126349" description="Large ribosomal subunit protein bL36c">
    <location>
        <begin position="1"/>
        <end position="37"/>
    </location>
</feature>
<reference key="1">
    <citation type="journal article" date="2000" name="Plant Mol. Biol. Rep.">
        <title>Chinese spring wheat (Triticum aestivum L.) chloroplast genome: complete sequence and contig clones.</title>
        <authorList>
            <person name="Ogihara Y."/>
            <person name="Isono K."/>
            <person name="Kojima T."/>
            <person name="Endo A."/>
            <person name="Hanaoka M."/>
            <person name="Shiina T."/>
            <person name="Terachi T."/>
            <person name="Utsugi S."/>
            <person name="Murata M."/>
            <person name="Mori N."/>
            <person name="Takumi S."/>
            <person name="Ikeo K."/>
            <person name="Gojobori T."/>
            <person name="Murai R."/>
            <person name="Murai K."/>
            <person name="Matsuoka Y."/>
            <person name="Ohnishi Y."/>
            <person name="Tajiri H."/>
            <person name="Tsunewaki K."/>
        </authorList>
    </citation>
    <scope>NUCLEOTIDE SEQUENCE [LARGE SCALE GENOMIC DNA]</scope>
    <source>
        <strain>cv. Chinese Spring</strain>
    </source>
</reference>